<organism>
    <name type="scientific">Gloeobacter violaceus (strain ATCC 29082 / PCC 7421)</name>
    <dbReference type="NCBI Taxonomy" id="251221"/>
    <lineage>
        <taxon>Bacteria</taxon>
        <taxon>Bacillati</taxon>
        <taxon>Cyanobacteriota</taxon>
        <taxon>Cyanophyceae</taxon>
        <taxon>Gloeobacterales</taxon>
        <taxon>Gloeobacteraceae</taxon>
        <taxon>Gloeobacter</taxon>
    </lineage>
</organism>
<comment type="function">
    <text evidence="1">Specifically methylates the pseudouridine at position 1915 (m3Psi1915) in 23S rRNA.</text>
</comment>
<comment type="catalytic activity">
    <reaction evidence="1">
        <text>pseudouridine(1915) in 23S rRNA + S-adenosyl-L-methionine = N(3)-methylpseudouridine(1915) in 23S rRNA + S-adenosyl-L-homocysteine + H(+)</text>
        <dbReference type="Rhea" id="RHEA:42752"/>
        <dbReference type="Rhea" id="RHEA-COMP:10221"/>
        <dbReference type="Rhea" id="RHEA-COMP:10222"/>
        <dbReference type="ChEBI" id="CHEBI:15378"/>
        <dbReference type="ChEBI" id="CHEBI:57856"/>
        <dbReference type="ChEBI" id="CHEBI:59789"/>
        <dbReference type="ChEBI" id="CHEBI:65314"/>
        <dbReference type="ChEBI" id="CHEBI:74486"/>
        <dbReference type="EC" id="2.1.1.177"/>
    </reaction>
</comment>
<comment type="subunit">
    <text evidence="1">Homodimer.</text>
</comment>
<comment type="subcellular location">
    <subcellularLocation>
        <location evidence="1">Cytoplasm</location>
    </subcellularLocation>
</comment>
<comment type="similarity">
    <text evidence="1">Belongs to the RNA methyltransferase RlmH family.</text>
</comment>
<accession>Q7NKY9</accession>
<keyword id="KW-0963">Cytoplasm</keyword>
<keyword id="KW-0489">Methyltransferase</keyword>
<keyword id="KW-1185">Reference proteome</keyword>
<keyword id="KW-0698">rRNA processing</keyword>
<keyword id="KW-0949">S-adenosyl-L-methionine</keyword>
<keyword id="KW-0808">Transferase</keyword>
<reference key="1">
    <citation type="journal article" date="2003" name="DNA Res.">
        <title>Complete genome structure of Gloeobacter violaceus PCC 7421, a cyanobacterium that lacks thylakoids.</title>
        <authorList>
            <person name="Nakamura Y."/>
            <person name="Kaneko T."/>
            <person name="Sato S."/>
            <person name="Mimuro M."/>
            <person name="Miyashita H."/>
            <person name="Tsuchiya T."/>
            <person name="Sasamoto S."/>
            <person name="Watanabe A."/>
            <person name="Kawashima K."/>
            <person name="Kishida Y."/>
            <person name="Kiyokawa C."/>
            <person name="Kohara M."/>
            <person name="Matsumoto M."/>
            <person name="Matsuno A."/>
            <person name="Nakazaki N."/>
            <person name="Shimpo S."/>
            <person name="Takeuchi C."/>
            <person name="Yamada M."/>
            <person name="Tabata S."/>
        </authorList>
    </citation>
    <scope>NUCLEOTIDE SEQUENCE [LARGE SCALE GENOMIC DNA]</scope>
    <source>
        <strain>ATCC 29082 / PCC 7421</strain>
    </source>
</reference>
<feature type="chain" id="PRO_0000198123" description="Ribosomal RNA large subunit methyltransferase H">
    <location>
        <begin position="1"/>
        <end position="151"/>
    </location>
</feature>
<feature type="binding site" evidence="1">
    <location>
        <position position="70"/>
    </location>
    <ligand>
        <name>S-adenosyl-L-methionine</name>
        <dbReference type="ChEBI" id="CHEBI:59789"/>
    </ligand>
</feature>
<feature type="binding site" evidence="1">
    <location>
        <position position="99"/>
    </location>
    <ligand>
        <name>S-adenosyl-L-methionine</name>
        <dbReference type="ChEBI" id="CHEBI:59789"/>
    </ligand>
</feature>
<feature type="binding site" evidence="1">
    <location>
        <begin position="118"/>
        <end position="123"/>
    </location>
    <ligand>
        <name>S-adenosyl-L-methionine</name>
        <dbReference type="ChEBI" id="CHEBI:59789"/>
    </ligand>
</feature>
<proteinExistence type="inferred from homology"/>
<gene>
    <name evidence="1" type="primary">rlmH</name>
    <name type="ordered locus">gll1337</name>
</gene>
<evidence type="ECO:0000255" key="1">
    <source>
        <dbReference type="HAMAP-Rule" id="MF_00658"/>
    </source>
</evidence>
<name>RLMH_GLOVI</name>
<dbReference type="EC" id="2.1.1.177" evidence="1"/>
<dbReference type="EMBL" id="BA000045">
    <property type="protein sequence ID" value="BAC89278.1"/>
    <property type="molecule type" value="Genomic_DNA"/>
</dbReference>
<dbReference type="RefSeq" id="NP_924283.1">
    <property type="nucleotide sequence ID" value="NC_005125.1"/>
</dbReference>
<dbReference type="RefSeq" id="WP_011141337.1">
    <property type="nucleotide sequence ID" value="NC_005125.1"/>
</dbReference>
<dbReference type="SMR" id="Q7NKY9"/>
<dbReference type="STRING" id="251221.gene:10758820"/>
<dbReference type="EnsemblBacteria" id="BAC89278">
    <property type="protein sequence ID" value="BAC89278"/>
    <property type="gene ID" value="BAC89278"/>
</dbReference>
<dbReference type="KEGG" id="gvi:gll1337"/>
<dbReference type="PATRIC" id="fig|251221.4.peg.1363"/>
<dbReference type="eggNOG" id="COG1576">
    <property type="taxonomic scope" value="Bacteria"/>
</dbReference>
<dbReference type="HOGENOM" id="CLU_100552_0_0_3"/>
<dbReference type="InParanoid" id="Q7NKY9"/>
<dbReference type="OrthoDB" id="9806643at2"/>
<dbReference type="PhylomeDB" id="Q7NKY9"/>
<dbReference type="Proteomes" id="UP000000557">
    <property type="component" value="Chromosome"/>
</dbReference>
<dbReference type="GO" id="GO:0005737">
    <property type="term" value="C:cytoplasm"/>
    <property type="evidence" value="ECO:0007669"/>
    <property type="project" value="UniProtKB-SubCell"/>
</dbReference>
<dbReference type="GO" id="GO:0070038">
    <property type="term" value="F:rRNA (pseudouridine-N3-)-methyltransferase activity"/>
    <property type="evidence" value="ECO:0007669"/>
    <property type="project" value="UniProtKB-UniRule"/>
</dbReference>
<dbReference type="CDD" id="cd18081">
    <property type="entry name" value="RlmH-like"/>
    <property type="match status" value="1"/>
</dbReference>
<dbReference type="Gene3D" id="3.40.1280.10">
    <property type="match status" value="1"/>
</dbReference>
<dbReference type="HAMAP" id="MF_00658">
    <property type="entry name" value="23SrRNA_methyltr_H"/>
    <property type="match status" value="1"/>
</dbReference>
<dbReference type="InterPro" id="IPR029028">
    <property type="entry name" value="Alpha/beta_knot_MTases"/>
</dbReference>
<dbReference type="InterPro" id="IPR003742">
    <property type="entry name" value="RlmH-like"/>
</dbReference>
<dbReference type="InterPro" id="IPR029026">
    <property type="entry name" value="tRNA_m1G_MTases_N"/>
</dbReference>
<dbReference type="PANTHER" id="PTHR33603">
    <property type="entry name" value="METHYLTRANSFERASE"/>
    <property type="match status" value="1"/>
</dbReference>
<dbReference type="PANTHER" id="PTHR33603:SF1">
    <property type="entry name" value="RIBOSOMAL RNA LARGE SUBUNIT METHYLTRANSFERASE H"/>
    <property type="match status" value="1"/>
</dbReference>
<dbReference type="Pfam" id="PF02590">
    <property type="entry name" value="SPOUT_MTase"/>
    <property type="match status" value="1"/>
</dbReference>
<dbReference type="PIRSF" id="PIRSF004505">
    <property type="entry name" value="MT_bac"/>
    <property type="match status" value="1"/>
</dbReference>
<dbReference type="SUPFAM" id="SSF75217">
    <property type="entry name" value="alpha/beta knot"/>
    <property type="match status" value="1"/>
</dbReference>
<sequence length="151" mass="16944">MRIKLVAVGRLREEAYERACAEYARRLAAYARLELVEVRDARIADSRAGLLKEGQALLDQLHPGEHAVLLDSGGKQFTSVELADWLENHTVQEPVFIVGSSHGVAPMVRERAQMVWSLSKLTFPHELARVIVLEQLYRAVTILAGHPYHHG</sequence>
<protein>
    <recommendedName>
        <fullName evidence="1">Ribosomal RNA large subunit methyltransferase H</fullName>
        <ecNumber evidence="1">2.1.1.177</ecNumber>
    </recommendedName>
    <alternativeName>
        <fullName evidence="1">23S rRNA (pseudouridine1915-N3)-methyltransferase</fullName>
    </alternativeName>
    <alternativeName>
        <fullName evidence="1">23S rRNA m3Psi1915 methyltransferase</fullName>
    </alternativeName>
    <alternativeName>
        <fullName evidence="1">rRNA (pseudouridine-N3-)-methyltransferase RlmH</fullName>
    </alternativeName>
</protein>